<comment type="function">
    <text evidence="1">Together with the chaperonin GroEL, plays an essential role in assisting protein folding. The GroEL-GroES system forms a nano-cage that allows encapsulation of the non-native substrate proteins and provides a physical environment optimized to promote and accelerate protein folding. GroES binds to the apical surface of the GroEL ring, thereby capping the opening of the GroEL channel.</text>
</comment>
<comment type="subunit">
    <text evidence="1">Heptamer of 7 subunits arranged in a ring. Interacts with the chaperonin GroEL.</text>
</comment>
<comment type="subcellular location">
    <subcellularLocation>
        <location evidence="1">Cytoplasm</location>
    </subcellularLocation>
</comment>
<comment type="similarity">
    <text evidence="1">Belongs to the GroES chaperonin family.</text>
</comment>
<protein>
    <recommendedName>
        <fullName evidence="1">Co-chaperonin GroES</fullName>
    </recommendedName>
    <alternativeName>
        <fullName evidence="1">10 kDa chaperonin</fullName>
    </alternativeName>
    <alternativeName>
        <fullName evidence="1">Chaperonin-10</fullName>
        <shortName evidence="1">Cpn10</shortName>
    </alternativeName>
</protein>
<reference key="1">
    <citation type="submission" date="2005-09" db="EMBL/GenBank/DDBJ databases">
        <title>Complete sequence of chromosome 1 of Rhodobacter sphaeroides 2.4.1.</title>
        <authorList>
            <person name="Copeland A."/>
            <person name="Lucas S."/>
            <person name="Lapidus A."/>
            <person name="Barry K."/>
            <person name="Detter J.C."/>
            <person name="Glavina T."/>
            <person name="Hammon N."/>
            <person name="Israni S."/>
            <person name="Pitluck S."/>
            <person name="Richardson P."/>
            <person name="Mackenzie C."/>
            <person name="Choudhary M."/>
            <person name="Larimer F."/>
            <person name="Hauser L.J."/>
            <person name="Land M."/>
            <person name="Donohue T.J."/>
            <person name="Kaplan S."/>
        </authorList>
    </citation>
    <scope>NUCLEOTIDE SEQUENCE [LARGE SCALE GENOMIC DNA]</scope>
    <source>
        <strain>ATCC 17023 / DSM 158 / JCM 6121 / CCUG 31486 / LMG 2827 / NBRC 12203 / NCIMB 8253 / ATH 2.4.1.</strain>
    </source>
</reference>
<organism>
    <name type="scientific">Cereibacter sphaeroides (strain ATCC 17023 / DSM 158 / JCM 6121 / CCUG 31486 / LMG 2827 / NBRC 12203 / NCIMB 8253 / ATH 2.4.1.)</name>
    <name type="common">Rhodobacter sphaeroides</name>
    <dbReference type="NCBI Taxonomy" id="272943"/>
    <lineage>
        <taxon>Bacteria</taxon>
        <taxon>Pseudomonadati</taxon>
        <taxon>Pseudomonadota</taxon>
        <taxon>Alphaproteobacteria</taxon>
        <taxon>Rhodobacterales</taxon>
        <taxon>Paracoccaceae</taxon>
        <taxon>Cereibacter</taxon>
    </lineage>
</organism>
<keyword id="KW-0143">Chaperone</keyword>
<keyword id="KW-0963">Cytoplasm</keyword>
<keyword id="KW-1185">Reference proteome</keyword>
<proteinExistence type="inferred from homology"/>
<evidence type="ECO:0000255" key="1">
    <source>
        <dbReference type="HAMAP-Rule" id="MF_00580"/>
    </source>
</evidence>
<accession>Q3J420</accession>
<name>CH10_CERS4</name>
<gene>
    <name evidence="1" type="primary">groES</name>
    <name evidence="1" type="synonym">groS</name>
    <name type="ordered locus">RHOS4_08960</name>
    <name type="ORF">RSP_2310</name>
</gene>
<sequence>MAFKPLHDRVLVRRVQSDEKTKGGLIIPDTAKEKPAEGEVVSCGEGARKDSGELIAMSVKAGDRVLFGKWSGTEVTIDGAELLIMKESDILGILS</sequence>
<feature type="chain" id="PRO_1000025349" description="Co-chaperonin GroES">
    <location>
        <begin position="1"/>
        <end position="95"/>
    </location>
</feature>
<dbReference type="EMBL" id="CP000143">
    <property type="protein sequence ID" value="ABA78464.1"/>
    <property type="molecule type" value="Genomic_DNA"/>
</dbReference>
<dbReference type="RefSeq" id="WP_002719473.1">
    <property type="nucleotide sequence ID" value="NZ_CP030271.1"/>
</dbReference>
<dbReference type="RefSeq" id="YP_352365.1">
    <property type="nucleotide sequence ID" value="NC_007493.2"/>
</dbReference>
<dbReference type="SMR" id="Q3J420"/>
<dbReference type="STRING" id="272943.RSP_2310"/>
<dbReference type="EnsemblBacteria" id="ABA78464">
    <property type="protein sequence ID" value="ABA78464"/>
    <property type="gene ID" value="RSP_2310"/>
</dbReference>
<dbReference type="KEGG" id="rsp:RSP_2310"/>
<dbReference type="PATRIC" id="fig|272943.9.peg.1221"/>
<dbReference type="eggNOG" id="COG0234">
    <property type="taxonomic scope" value="Bacteria"/>
</dbReference>
<dbReference type="OrthoDB" id="9806791at2"/>
<dbReference type="PhylomeDB" id="Q3J420"/>
<dbReference type="Proteomes" id="UP000002703">
    <property type="component" value="Chromosome 1"/>
</dbReference>
<dbReference type="GO" id="GO:0005737">
    <property type="term" value="C:cytoplasm"/>
    <property type="evidence" value="ECO:0007669"/>
    <property type="project" value="UniProtKB-SubCell"/>
</dbReference>
<dbReference type="GO" id="GO:0005524">
    <property type="term" value="F:ATP binding"/>
    <property type="evidence" value="ECO:0007669"/>
    <property type="project" value="InterPro"/>
</dbReference>
<dbReference type="GO" id="GO:0046872">
    <property type="term" value="F:metal ion binding"/>
    <property type="evidence" value="ECO:0007669"/>
    <property type="project" value="TreeGrafter"/>
</dbReference>
<dbReference type="GO" id="GO:0044183">
    <property type="term" value="F:protein folding chaperone"/>
    <property type="evidence" value="ECO:0007669"/>
    <property type="project" value="InterPro"/>
</dbReference>
<dbReference type="GO" id="GO:0051087">
    <property type="term" value="F:protein-folding chaperone binding"/>
    <property type="evidence" value="ECO:0007669"/>
    <property type="project" value="TreeGrafter"/>
</dbReference>
<dbReference type="GO" id="GO:0051082">
    <property type="term" value="F:unfolded protein binding"/>
    <property type="evidence" value="ECO:0007669"/>
    <property type="project" value="TreeGrafter"/>
</dbReference>
<dbReference type="GO" id="GO:0051085">
    <property type="term" value="P:chaperone cofactor-dependent protein refolding"/>
    <property type="evidence" value="ECO:0007669"/>
    <property type="project" value="TreeGrafter"/>
</dbReference>
<dbReference type="CDD" id="cd00320">
    <property type="entry name" value="cpn10"/>
    <property type="match status" value="1"/>
</dbReference>
<dbReference type="FunFam" id="2.30.33.40:FF:000001">
    <property type="entry name" value="10 kDa chaperonin"/>
    <property type="match status" value="1"/>
</dbReference>
<dbReference type="Gene3D" id="2.30.33.40">
    <property type="entry name" value="GroES chaperonin"/>
    <property type="match status" value="1"/>
</dbReference>
<dbReference type="HAMAP" id="MF_00580">
    <property type="entry name" value="CH10"/>
    <property type="match status" value="1"/>
</dbReference>
<dbReference type="InterPro" id="IPR020818">
    <property type="entry name" value="Chaperonin_GroES"/>
</dbReference>
<dbReference type="InterPro" id="IPR037124">
    <property type="entry name" value="Chaperonin_GroES_sf"/>
</dbReference>
<dbReference type="InterPro" id="IPR018369">
    <property type="entry name" value="Chaprnonin_Cpn10_CS"/>
</dbReference>
<dbReference type="InterPro" id="IPR011032">
    <property type="entry name" value="GroES-like_sf"/>
</dbReference>
<dbReference type="NCBIfam" id="NF001527">
    <property type="entry name" value="PRK00364.1-2"/>
    <property type="match status" value="1"/>
</dbReference>
<dbReference type="NCBIfam" id="NF001529">
    <property type="entry name" value="PRK00364.1-5"/>
    <property type="match status" value="1"/>
</dbReference>
<dbReference type="NCBIfam" id="NF001531">
    <property type="entry name" value="PRK00364.2-2"/>
    <property type="match status" value="1"/>
</dbReference>
<dbReference type="NCBIfam" id="NF001533">
    <property type="entry name" value="PRK00364.2-4"/>
    <property type="match status" value="1"/>
</dbReference>
<dbReference type="PANTHER" id="PTHR10772">
    <property type="entry name" value="10 KDA HEAT SHOCK PROTEIN"/>
    <property type="match status" value="1"/>
</dbReference>
<dbReference type="PANTHER" id="PTHR10772:SF58">
    <property type="entry name" value="CO-CHAPERONIN GROES"/>
    <property type="match status" value="1"/>
</dbReference>
<dbReference type="Pfam" id="PF00166">
    <property type="entry name" value="Cpn10"/>
    <property type="match status" value="1"/>
</dbReference>
<dbReference type="PRINTS" id="PR00297">
    <property type="entry name" value="CHAPERONIN10"/>
</dbReference>
<dbReference type="SMART" id="SM00883">
    <property type="entry name" value="Cpn10"/>
    <property type="match status" value="1"/>
</dbReference>
<dbReference type="SUPFAM" id="SSF50129">
    <property type="entry name" value="GroES-like"/>
    <property type="match status" value="1"/>
</dbReference>
<dbReference type="PROSITE" id="PS00681">
    <property type="entry name" value="CHAPERONINS_CPN10"/>
    <property type="match status" value="1"/>
</dbReference>